<accession>Q00123</accession>
<sequence length="333" mass="37464">MTSSIPAIVYTNGTAAISRELTLAKRERDELRREVETLNLELSAQVDKNRALEETLGTRDAEISRLSKLVDSPRDSLIRMYITKNQTLAQRVKTLEHRLARETKKGSRAGPVATGTGVYGPGPYPRVPIPVADYPIMYSRVGFPEYVLTMYAAYGKCQKNILDTYVRGGVVTPEFYTVLFSASAIFPVGWFDRQFSVSTGHDLDYFCWKLVALRVTTQYLTLLNTFSDSAQLALKTHVNQRQLFQTTQFLRVQQQQFVDLVNIRSAELGEVYTSAPPLDEYTKKRANLIAEAGDEDLDKLLILADDPIIRVPAEKNRKRRAIGGSEELTACVE</sequence>
<dbReference type="EMBL" id="M75136">
    <property type="protein sequence ID" value="AAA88127.1"/>
    <property type="molecule type" value="Genomic_DNA"/>
</dbReference>
<dbReference type="PIR" id="G36788">
    <property type="entry name" value="G36788"/>
</dbReference>
<dbReference type="RefSeq" id="NP_041115.1">
    <property type="nucleotide sequence ID" value="NC_001493.2"/>
</dbReference>
<dbReference type="SMR" id="Q00123"/>
<dbReference type="GeneID" id="1488425"/>
<dbReference type="KEGG" id="vg:1488425"/>
<dbReference type="Proteomes" id="UP000007643">
    <property type="component" value="Segment"/>
</dbReference>
<name>VG24_ICHVA</name>
<reference key="1">
    <citation type="journal article" date="1992" name="Virology">
        <title>Channel catfish virus: a new type of herpesvirus.</title>
        <authorList>
            <person name="Davison A.J."/>
        </authorList>
    </citation>
    <scope>NUCLEOTIDE SEQUENCE [LARGE SCALE GENOMIC DNA]</scope>
</reference>
<protein>
    <recommendedName>
        <fullName>Uncharacterized protein ORF24</fullName>
    </recommendedName>
</protein>
<feature type="chain" id="PRO_0000222107" description="Uncharacterized protein ORF24">
    <location>
        <begin position="1"/>
        <end position="333"/>
    </location>
</feature>
<proteinExistence type="predicted"/>
<keyword id="KW-1185">Reference proteome</keyword>
<organism>
    <name type="scientific">Ictalurid herpesvirus 1 (strain Auburn)</name>
    <name type="common">IcHV-1</name>
    <name type="synonym">Channel catfish herpesvirus</name>
    <dbReference type="NCBI Taxonomy" id="766178"/>
    <lineage>
        <taxon>Viruses</taxon>
        <taxon>Duplodnaviria</taxon>
        <taxon>Heunggongvirae</taxon>
        <taxon>Peploviricota</taxon>
        <taxon>Herviviricetes</taxon>
        <taxon>Herpesvirales</taxon>
        <taxon>Alloherpesviridae</taxon>
        <taxon>Ictavirus</taxon>
        <taxon>Ictavirus ictaluridallo1</taxon>
        <taxon>Ictalurid herpesvirus 1</taxon>
    </lineage>
</organism>
<organismHost>
    <name type="scientific">Ictaluridae</name>
    <name type="common">bullhead catfishes</name>
    <dbReference type="NCBI Taxonomy" id="7996"/>
</organismHost>
<gene>
    <name type="primary">ORF24</name>
</gene>